<gene>
    <name evidence="1" type="primary">rpmE</name>
    <name type="ordered locus">RHECIAT_CH0003749</name>
</gene>
<sequence>MKAGIHPDYHMIKVVMTDGTEYETRSTWGSEGAVMNLEIDSKSHPAWTGGNQQLMDRGGRVSKFNKRFGGLGL</sequence>
<name>RL31_RHIE6</name>
<proteinExistence type="inferred from homology"/>
<keyword id="KW-0687">Ribonucleoprotein</keyword>
<keyword id="KW-0689">Ribosomal protein</keyword>
<keyword id="KW-0694">RNA-binding</keyword>
<keyword id="KW-0699">rRNA-binding</keyword>
<comment type="function">
    <text evidence="1">Binds the 23S rRNA.</text>
</comment>
<comment type="subunit">
    <text evidence="1">Part of the 50S ribosomal subunit.</text>
</comment>
<comment type="similarity">
    <text evidence="1">Belongs to the bacterial ribosomal protein bL31 family. Type A subfamily.</text>
</comment>
<evidence type="ECO:0000255" key="1">
    <source>
        <dbReference type="HAMAP-Rule" id="MF_00501"/>
    </source>
</evidence>
<evidence type="ECO:0000305" key="2"/>
<feature type="chain" id="PRO_1000126705" description="Large ribosomal subunit protein bL31">
    <location>
        <begin position="1"/>
        <end position="73"/>
    </location>
</feature>
<accession>B3PZ23</accession>
<reference key="1">
    <citation type="journal article" date="2010" name="Appl. Environ. Microbiol.">
        <title>Conserved symbiotic plasmid DNA sequences in the multireplicon pangenomic structure of Rhizobium etli.</title>
        <authorList>
            <person name="Gonzalez V."/>
            <person name="Acosta J.L."/>
            <person name="Santamaria R.I."/>
            <person name="Bustos P."/>
            <person name="Fernandez J.L."/>
            <person name="Hernandez Gonzalez I.L."/>
            <person name="Diaz R."/>
            <person name="Flores M."/>
            <person name="Palacios R."/>
            <person name="Mora J."/>
            <person name="Davila G."/>
        </authorList>
    </citation>
    <scope>NUCLEOTIDE SEQUENCE [LARGE SCALE GENOMIC DNA]</scope>
    <source>
        <strain>CIAT 652</strain>
    </source>
</reference>
<organism>
    <name type="scientific">Rhizobium etli (strain CIAT 652)</name>
    <dbReference type="NCBI Taxonomy" id="491916"/>
    <lineage>
        <taxon>Bacteria</taxon>
        <taxon>Pseudomonadati</taxon>
        <taxon>Pseudomonadota</taxon>
        <taxon>Alphaproteobacteria</taxon>
        <taxon>Hyphomicrobiales</taxon>
        <taxon>Rhizobiaceae</taxon>
        <taxon>Rhizobium/Agrobacterium group</taxon>
        <taxon>Rhizobium</taxon>
    </lineage>
</organism>
<dbReference type="EMBL" id="CP001074">
    <property type="protein sequence ID" value="ACE92687.1"/>
    <property type="molecule type" value="Genomic_DNA"/>
</dbReference>
<dbReference type="SMR" id="B3PZ23"/>
<dbReference type="KEGG" id="rec:RHECIAT_CH0003749"/>
<dbReference type="eggNOG" id="COG0254">
    <property type="taxonomic scope" value="Bacteria"/>
</dbReference>
<dbReference type="HOGENOM" id="CLU_114306_3_2_5"/>
<dbReference type="Proteomes" id="UP000008817">
    <property type="component" value="Chromosome"/>
</dbReference>
<dbReference type="GO" id="GO:1990904">
    <property type="term" value="C:ribonucleoprotein complex"/>
    <property type="evidence" value="ECO:0007669"/>
    <property type="project" value="UniProtKB-KW"/>
</dbReference>
<dbReference type="GO" id="GO:0005840">
    <property type="term" value="C:ribosome"/>
    <property type="evidence" value="ECO:0007669"/>
    <property type="project" value="UniProtKB-KW"/>
</dbReference>
<dbReference type="GO" id="GO:0019843">
    <property type="term" value="F:rRNA binding"/>
    <property type="evidence" value="ECO:0007669"/>
    <property type="project" value="UniProtKB-KW"/>
</dbReference>
<dbReference type="GO" id="GO:0003735">
    <property type="term" value="F:structural constituent of ribosome"/>
    <property type="evidence" value="ECO:0007669"/>
    <property type="project" value="InterPro"/>
</dbReference>
<dbReference type="GO" id="GO:0006412">
    <property type="term" value="P:translation"/>
    <property type="evidence" value="ECO:0007669"/>
    <property type="project" value="UniProtKB-UniRule"/>
</dbReference>
<dbReference type="Gene3D" id="4.10.830.30">
    <property type="entry name" value="Ribosomal protein L31"/>
    <property type="match status" value="1"/>
</dbReference>
<dbReference type="HAMAP" id="MF_00501">
    <property type="entry name" value="Ribosomal_bL31_1"/>
    <property type="match status" value="1"/>
</dbReference>
<dbReference type="InterPro" id="IPR034704">
    <property type="entry name" value="Ribosomal_bL28/bL31-like_sf"/>
</dbReference>
<dbReference type="InterPro" id="IPR002150">
    <property type="entry name" value="Ribosomal_bL31"/>
</dbReference>
<dbReference type="InterPro" id="IPR027491">
    <property type="entry name" value="Ribosomal_bL31_A"/>
</dbReference>
<dbReference type="InterPro" id="IPR042105">
    <property type="entry name" value="Ribosomal_bL31_sf"/>
</dbReference>
<dbReference type="NCBIfam" id="TIGR00105">
    <property type="entry name" value="L31"/>
    <property type="match status" value="1"/>
</dbReference>
<dbReference type="NCBIfam" id="NF001809">
    <property type="entry name" value="PRK00528.1"/>
    <property type="match status" value="1"/>
</dbReference>
<dbReference type="PANTHER" id="PTHR33280">
    <property type="entry name" value="50S RIBOSOMAL PROTEIN L31, CHLOROPLASTIC"/>
    <property type="match status" value="1"/>
</dbReference>
<dbReference type="PANTHER" id="PTHR33280:SF6">
    <property type="entry name" value="LARGE RIBOSOMAL SUBUNIT PROTEIN BL31A"/>
    <property type="match status" value="1"/>
</dbReference>
<dbReference type="Pfam" id="PF01197">
    <property type="entry name" value="Ribosomal_L31"/>
    <property type="match status" value="1"/>
</dbReference>
<dbReference type="PRINTS" id="PR01249">
    <property type="entry name" value="RIBOSOMALL31"/>
</dbReference>
<dbReference type="SUPFAM" id="SSF143800">
    <property type="entry name" value="L28p-like"/>
    <property type="match status" value="1"/>
</dbReference>
<dbReference type="PROSITE" id="PS01143">
    <property type="entry name" value="RIBOSOMAL_L31"/>
    <property type="match status" value="1"/>
</dbReference>
<protein>
    <recommendedName>
        <fullName evidence="1">Large ribosomal subunit protein bL31</fullName>
    </recommendedName>
    <alternativeName>
        <fullName evidence="2">50S ribosomal protein L31</fullName>
    </alternativeName>
</protein>